<comment type="subunit">
    <text evidence="3">Interacts with host ATP1B1.</text>
</comment>
<comment type="subcellular location">
    <subcellularLocation>
        <location evidence="3">Host membrane</location>
        <topology evidence="3">Single-pass membrane protein</topology>
    </subcellularLocation>
</comment>
<comment type="similarity">
    <text evidence="4">Belongs to the HHV-5 UL136 protein family.</text>
</comment>
<gene>
    <name type="primary">UL136</name>
</gene>
<evidence type="ECO:0000255" key="1"/>
<evidence type="ECO:0000256" key="2">
    <source>
        <dbReference type="SAM" id="MobiDB-lite"/>
    </source>
</evidence>
<evidence type="ECO:0000269" key="3">
    <source>
    </source>
</evidence>
<evidence type="ECO:0000305" key="4"/>
<name>UL136_HCMVM</name>
<proteinExistence type="evidence at protein level"/>
<reference key="1">
    <citation type="journal article" date="2004" name="J. Gen. Virol.">
        <title>Genetic content of wild-type human cytomegalovirus.</title>
        <authorList>
            <person name="Dolan A."/>
            <person name="Cunningham C."/>
            <person name="Hector R.D."/>
            <person name="Hassan-Walker A.F."/>
            <person name="Lee L."/>
            <person name="Addison C."/>
            <person name="Dargan D.J."/>
            <person name="McGeoch D.J."/>
            <person name="Gatherer D."/>
            <person name="Emery V.C."/>
            <person name="Griffiths P.D."/>
            <person name="Sinzger C."/>
            <person name="McSharry B.P."/>
            <person name="Wilkinson G.W.G."/>
            <person name="Davison A.J."/>
        </authorList>
    </citation>
    <scope>NUCLEOTIDE SEQUENCE [LARGE SCALE GENOMIC DNA]</scope>
</reference>
<reference key="2">
    <citation type="journal article" date="2011" name="Braz. J. Med. Biol. Res.">
        <title>Interaction between human cytomegalovirus UL136 protein and ATP1B1 protein.</title>
        <authorList>
            <person name="Cui X."/>
            <person name="Sun Z.R."/>
            <person name="Ren G.W."/>
            <person name="Wang G.L."/>
            <person name="Qi Y."/>
            <person name="Ma Y.P."/>
            <person name="Ruan Q."/>
        </authorList>
    </citation>
    <scope>SUBCELLULAR LOCATION</scope>
    <scope>INTERACTION WITH HOST ATP1B1</scope>
    <source>
        <strain>H</strain>
    </source>
</reference>
<organism>
    <name type="scientific">Human cytomegalovirus (strain Merlin)</name>
    <name type="common">HHV-5</name>
    <name type="synonym">Human herpesvirus 5</name>
    <dbReference type="NCBI Taxonomy" id="295027"/>
    <lineage>
        <taxon>Viruses</taxon>
        <taxon>Duplodnaviria</taxon>
        <taxon>Heunggongvirae</taxon>
        <taxon>Peploviricota</taxon>
        <taxon>Herviviricetes</taxon>
        <taxon>Herpesvirales</taxon>
        <taxon>Orthoherpesviridae</taxon>
        <taxon>Betaherpesvirinae</taxon>
        <taxon>Cytomegalovirus</taxon>
        <taxon>Cytomegalovirus humanbeta5</taxon>
        <taxon>Human cytomegalovirus</taxon>
    </lineage>
</organism>
<accession>F5HF35</accession>
<sequence length="240" mass="27060">MSVKGVEMPEMTWDLDVGNKWRRRKVLSRIHRFWECRLRVWWLSDAGVRETDPPRPRRRPTWMTAVFHVICAVLLTLMIMAIGALIAYLRYYHQDSWRDMLHDLFCGCHYPEKCRRHHERQRSRRRAMDVPDPELGDPARRPLNGAMYYGSGCRFDTVEMVDETRPAPPALSSPETGDDSNDDAVAGGGAGGVTSSATRTTSSNALLPEWMDAVHVAVQAAVQATVQVSGPRENAVSPAT</sequence>
<organismHost>
    <name type="scientific">Homo sapiens</name>
    <name type="common">Human</name>
    <dbReference type="NCBI Taxonomy" id="9606"/>
</organismHost>
<feature type="chain" id="PRO_0000417857" description="Protein UL136">
    <location>
        <begin position="1"/>
        <end position="240"/>
    </location>
</feature>
<feature type="transmembrane region" description="Helical" evidence="1">
    <location>
        <begin position="69"/>
        <end position="89"/>
    </location>
</feature>
<feature type="region of interest" description="Disordered" evidence="2">
    <location>
        <begin position="119"/>
        <end position="143"/>
    </location>
</feature>
<feature type="region of interest" description="Disordered" evidence="2">
    <location>
        <begin position="164"/>
        <end position="200"/>
    </location>
</feature>
<dbReference type="EMBL" id="AY446894">
    <property type="protein sequence ID" value="AAR31683.1"/>
    <property type="molecule type" value="Genomic_DNA"/>
</dbReference>
<dbReference type="RefSeq" id="YP_081579.1">
    <property type="nucleotide sequence ID" value="NC_006273.2"/>
</dbReference>
<dbReference type="DNASU" id="3077568"/>
<dbReference type="GeneID" id="3077568"/>
<dbReference type="KEGG" id="vg:3077568"/>
<dbReference type="Proteomes" id="UP000000938">
    <property type="component" value="Segment"/>
</dbReference>
<dbReference type="GO" id="GO:0033644">
    <property type="term" value="C:host cell membrane"/>
    <property type="evidence" value="ECO:0007669"/>
    <property type="project" value="UniProtKB-SubCell"/>
</dbReference>
<dbReference type="GO" id="GO:0016020">
    <property type="term" value="C:membrane"/>
    <property type="evidence" value="ECO:0007669"/>
    <property type="project" value="UniProtKB-KW"/>
</dbReference>
<keyword id="KW-1043">Host membrane</keyword>
<keyword id="KW-0945">Host-virus interaction</keyword>
<keyword id="KW-0472">Membrane</keyword>
<keyword id="KW-1185">Reference proteome</keyword>
<keyword id="KW-0812">Transmembrane</keyword>
<keyword id="KW-1133">Transmembrane helix</keyword>
<protein>
    <recommendedName>
        <fullName>Protein UL136</fullName>
    </recommendedName>
</protein>